<protein>
    <recommendedName>
        <fullName>Vacuolar protein sorting-associated protein 26</fullName>
    </recommendedName>
</protein>
<dbReference type="EMBL" id="CU329670">
    <property type="protein sequence ID" value="CAA93563.1"/>
    <property type="molecule type" value="Genomic_DNA"/>
</dbReference>
<dbReference type="PIR" id="T38872">
    <property type="entry name" value="T38872"/>
</dbReference>
<dbReference type="RefSeq" id="NP_593695.1">
    <property type="nucleotide sequence ID" value="NM_001019127.2"/>
</dbReference>
<dbReference type="SMR" id="Q10243"/>
<dbReference type="BioGRID" id="279817">
    <property type="interactions" value="5"/>
</dbReference>
<dbReference type="FunCoup" id="Q10243">
    <property type="interactions" value="574"/>
</dbReference>
<dbReference type="STRING" id="284812.Q10243"/>
<dbReference type="PaxDb" id="4896-SPAC4G9.13c.1"/>
<dbReference type="EnsemblFungi" id="SPAC4G9.13c.1">
    <property type="protein sequence ID" value="SPAC4G9.13c.1:pep"/>
    <property type="gene ID" value="SPAC4G9.13c"/>
</dbReference>
<dbReference type="GeneID" id="2543395"/>
<dbReference type="KEGG" id="spo:2543395"/>
<dbReference type="PomBase" id="SPAC4G9.13c">
    <property type="gene designation" value="vps26"/>
</dbReference>
<dbReference type="VEuPathDB" id="FungiDB:SPAC4G9.13c"/>
<dbReference type="eggNOG" id="KOG3063">
    <property type="taxonomic scope" value="Eukaryota"/>
</dbReference>
<dbReference type="HOGENOM" id="CLU_031077_2_0_1"/>
<dbReference type="InParanoid" id="Q10243"/>
<dbReference type="OMA" id="FKWKFSS"/>
<dbReference type="PhylomeDB" id="Q10243"/>
<dbReference type="Reactome" id="R-SPO-3238698">
    <property type="pathway name" value="WNT ligand biogenesis and trafficking"/>
</dbReference>
<dbReference type="PRO" id="PR:Q10243"/>
<dbReference type="Proteomes" id="UP000002485">
    <property type="component" value="Chromosome I"/>
</dbReference>
<dbReference type="GO" id="GO:0005829">
    <property type="term" value="C:cytosol"/>
    <property type="evidence" value="ECO:0007005"/>
    <property type="project" value="PomBase"/>
</dbReference>
<dbReference type="GO" id="GO:0005768">
    <property type="term" value="C:endosome"/>
    <property type="evidence" value="ECO:0000315"/>
    <property type="project" value="PomBase"/>
</dbReference>
<dbReference type="GO" id="GO:0005634">
    <property type="term" value="C:nucleus"/>
    <property type="evidence" value="ECO:0007005"/>
    <property type="project" value="PomBase"/>
</dbReference>
<dbReference type="GO" id="GO:0030904">
    <property type="term" value="C:retromer complex"/>
    <property type="evidence" value="ECO:0000315"/>
    <property type="project" value="PomBase"/>
</dbReference>
<dbReference type="GO" id="GO:0006886">
    <property type="term" value="P:intracellular protein transport"/>
    <property type="evidence" value="ECO:0000315"/>
    <property type="project" value="PomBase"/>
</dbReference>
<dbReference type="GO" id="GO:0042147">
    <property type="term" value="P:retrograde transport, endosome to Golgi"/>
    <property type="evidence" value="ECO:0000315"/>
    <property type="project" value="PomBase"/>
</dbReference>
<dbReference type="FunFam" id="2.60.40.640:FF:000015">
    <property type="entry name" value="Vacuolar protein sorting-associated protein 26"/>
    <property type="match status" value="1"/>
</dbReference>
<dbReference type="Gene3D" id="2.60.40.640">
    <property type="match status" value="2"/>
</dbReference>
<dbReference type="InterPro" id="IPR014752">
    <property type="entry name" value="Arrestin-like_C"/>
</dbReference>
<dbReference type="InterPro" id="IPR028934">
    <property type="entry name" value="Vps26-related"/>
</dbReference>
<dbReference type="PANTHER" id="PTHR12233">
    <property type="entry name" value="VACUOLAR PROTEIN SORTING 26 RELATED"/>
    <property type="match status" value="1"/>
</dbReference>
<dbReference type="Pfam" id="PF03643">
    <property type="entry name" value="Vps26"/>
    <property type="match status" value="1"/>
</dbReference>
<gene>
    <name type="primary">vps26</name>
    <name type="synonym">pep8</name>
    <name type="ORF">SPAC4G9.13c</name>
</gene>
<evidence type="ECO:0000250" key="1"/>
<evidence type="ECO:0000269" key="2">
    <source>
    </source>
</evidence>
<evidence type="ECO:0000305" key="3"/>
<name>VPS26_SCHPO</name>
<sequence>MDYFFKSPIDVDLHLDNEEERTFVDYEFEQGRKDKAPIYESDETVKGTVMIRLKDGRKLDHDGVKIEFIGQIENTYDKGNIHEFTRSVQELASPGEMRHAQMFEFEFKHVDKPYESYIGKNVKLRYICRVTVSRKMKDVIREKDLWVYRFENEPETNSLIRMDVGIDECLHIEFEYSKNKYHLKDVIIGKIYFILVRIKVQRMEVSIIRRETIGTSPNQYSNSETITRFQIMDGNPNRGETIPLRMFLNGYALTPTFRDVNKKFSVRYYLSLILVDEDQRRYFKQSEITLWRRRDEHE</sequence>
<comment type="function">
    <text evidence="2">Plays a role in vesicular protein sorting. Required for the endosome-to-Golgi retrieval of the vacuolar protein sorting receptor pep1/vps10. Component of the membrane-associated retromer complex which is essential in endosome-to-Golgi retrograde transport. The vps29-vps26-vps35 subcomplex may be involved in cargo selection.</text>
</comment>
<comment type="subunit">
    <text evidence="1 2">Component of the retromer complex which consists of vps29, vps6, vps35, vps5 and vps17 (By similarity). Component of a retromer subcomplex consisting of vps29, vps26 and vps35.</text>
</comment>
<comment type="similarity">
    <text evidence="3">Belongs to the VPS26 family.</text>
</comment>
<accession>Q10243</accession>
<feature type="chain" id="PRO_0000073014" description="Vacuolar protein sorting-associated protein 26">
    <location>
        <begin position="1"/>
        <end position="298"/>
    </location>
</feature>
<keyword id="KW-0653">Protein transport</keyword>
<keyword id="KW-1185">Reference proteome</keyword>
<keyword id="KW-0813">Transport</keyword>
<proteinExistence type="inferred from homology"/>
<reference key="1">
    <citation type="journal article" date="2002" name="Nature">
        <title>The genome sequence of Schizosaccharomyces pombe.</title>
        <authorList>
            <person name="Wood V."/>
            <person name="Gwilliam R."/>
            <person name="Rajandream M.A."/>
            <person name="Lyne M.H."/>
            <person name="Lyne R."/>
            <person name="Stewart A."/>
            <person name="Sgouros J.G."/>
            <person name="Peat N."/>
            <person name="Hayles J."/>
            <person name="Baker S.G."/>
            <person name="Basham D."/>
            <person name="Bowman S."/>
            <person name="Brooks K."/>
            <person name="Brown D."/>
            <person name="Brown S."/>
            <person name="Chillingworth T."/>
            <person name="Churcher C.M."/>
            <person name="Collins M."/>
            <person name="Connor R."/>
            <person name="Cronin A."/>
            <person name="Davis P."/>
            <person name="Feltwell T."/>
            <person name="Fraser A."/>
            <person name="Gentles S."/>
            <person name="Goble A."/>
            <person name="Hamlin N."/>
            <person name="Harris D.E."/>
            <person name="Hidalgo J."/>
            <person name="Hodgson G."/>
            <person name="Holroyd S."/>
            <person name="Hornsby T."/>
            <person name="Howarth S."/>
            <person name="Huckle E.J."/>
            <person name="Hunt S."/>
            <person name="Jagels K."/>
            <person name="James K.D."/>
            <person name="Jones L."/>
            <person name="Jones M."/>
            <person name="Leather S."/>
            <person name="McDonald S."/>
            <person name="McLean J."/>
            <person name="Mooney P."/>
            <person name="Moule S."/>
            <person name="Mungall K.L."/>
            <person name="Murphy L.D."/>
            <person name="Niblett D."/>
            <person name="Odell C."/>
            <person name="Oliver K."/>
            <person name="O'Neil S."/>
            <person name="Pearson D."/>
            <person name="Quail M.A."/>
            <person name="Rabbinowitsch E."/>
            <person name="Rutherford K.M."/>
            <person name="Rutter S."/>
            <person name="Saunders D."/>
            <person name="Seeger K."/>
            <person name="Sharp S."/>
            <person name="Skelton J."/>
            <person name="Simmonds M.N."/>
            <person name="Squares R."/>
            <person name="Squares S."/>
            <person name="Stevens K."/>
            <person name="Taylor K."/>
            <person name="Taylor R.G."/>
            <person name="Tivey A."/>
            <person name="Walsh S.V."/>
            <person name="Warren T."/>
            <person name="Whitehead S."/>
            <person name="Woodward J.R."/>
            <person name="Volckaert G."/>
            <person name="Aert R."/>
            <person name="Robben J."/>
            <person name="Grymonprez B."/>
            <person name="Weltjens I."/>
            <person name="Vanstreels E."/>
            <person name="Rieger M."/>
            <person name="Schaefer M."/>
            <person name="Mueller-Auer S."/>
            <person name="Gabel C."/>
            <person name="Fuchs M."/>
            <person name="Duesterhoeft A."/>
            <person name="Fritzc C."/>
            <person name="Holzer E."/>
            <person name="Moestl D."/>
            <person name="Hilbert H."/>
            <person name="Borzym K."/>
            <person name="Langer I."/>
            <person name="Beck A."/>
            <person name="Lehrach H."/>
            <person name="Reinhardt R."/>
            <person name="Pohl T.M."/>
            <person name="Eger P."/>
            <person name="Zimmermann W."/>
            <person name="Wedler H."/>
            <person name="Wambutt R."/>
            <person name="Purnelle B."/>
            <person name="Goffeau A."/>
            <person name="Cadieu E."/>
            <person name="Dreano S."/>
            <person name="Gloux S."/>
            <person name="Lelaure V."/>
            <person name="Mottier S."/>
            <person name="Galibert F."/>
            <person name="Aves S.J."/>
            <person name="Xiang Z."/>
            <person name="Hunt C."/>
            <person name="Moore K."/>
            <person name="Hurst S.M."/>
            <person name="Lucas M."/>
            <person name="Rochet M."/>
            <person name="Gaillardin C."/>
            <person name="Tallada V.A."/>
            <person name="Garzon A."/>
            <person name="Thode G."/>
            <person name="Daga R.R."/>
            <person name="Cruzado L."/>
            <person name="Jimenez J."/>
            <person name="Sanchez M."/>
            <person name="del Rey F."/>
            <person name="Benito J."/>
            <person name="Dominguez A."/>
            <person name="Revuelta J.L."/>
            <person name="Moreno S."/>
            <person name="Armstrong J."/>
            <person name="Forsburg S.L."/>
            <person name="Cerutti L."/>
            <person name="Lowe T."/>
            <person name="McCombie W.R."/>
            <person name="Paulsen I."/>
            <person name="Potashkin J."/>
            <person name="Shpakovski G.V."/>
            <person name="Ussery D."/>
            <person name="Barrell B.G."/>
            <person name="Nurse P."/>
        </authorList>
    </citation>
    <scope>NUCLEOTIDE SEQUENCE [LARGE SCALE GENOMIC DNA]</scope>
    <source>
        <strain>972 / ATCC 24843</strain>
    </source>
</reference>
<reference key="2">
    <citation type="journal article" date="2006" name="Microbiology">
        <title>Vacuolar protein sorting receptor in Schizosaccharomyces pombe.</title>
        <authorList>
            <person name="Iwaki T."/>
            <person name="Hosomi A."/>
            <person name="Tokudomi S."/>
            <person name="Kusunoki Y."/>
            <person name="Fujita Y."/>
            <person name="Giga-Hama Y."/>
            <person name="Tanaka N."/>
            <person name="Takegawa K."/>
        </authorList>
    </citation>
    <scope>FUNCTION</scope>
    <scope>IDENTIFICATION IN THE VPS29-VPS26-VPS35 RETROMER SUBCOMPLEX</scope>
</reference>
<reference key="3">
    <citation type="journal article" date="2006" name="Nat. Biotechnol.">
        <title>ORFeome cloning and global analysis of protein localization in the fission yeast Schizosaccharomyces pombe.</title>
        <authorList>
            <person name="Matsuyama A."/>
            <person name="Arai R."/>
            <person name="Yashiroda Y."/>
            <person name="Shirai A."/>
            <person name="Kamata A."/>
            <person name="Sekido S."/>
            <person name="Kobayashi Y."/>
            <person name="Hashimoto A."/>
            <person name="Hamamoto M."/>
            <person name="Hiraoka Y."/>
            <person name="Horinouchi S."/>
            <person name="Yoshida M."/>
        </authorList>
    </citation>
    <scope>SUBCELLULAR LOCATION [LARGE SCALE ANALYSIS]</scope>
</reference>
<organism>
    <name type="scientific">Schizosaccharomyces pombe (strain 972 / ATCC 24843)</name>
    <name type="common">Fission yeast</name>
    <dbReference type="NCBI Taxonomy" id="284812"/>
    <lineage>
        <taxon>Eukaryota</taxon>
        <taxon>Fungi</taxon>
        <taxon>Dikarya</taxon>
        <taxon>Ascomycota</taxon>
        <taxon>Taphrinomycotina</taxon>
        <taxon>Schizosaccharomycetes</taxon>
        <taxon>Schizosaccharomycetales</taxon>
        <taxon>Schizosaccharomycetaceae</taxon>
        <taxon>Schizosaccharomyces</taxon>
    </lineage>
</organism>